<keyword id="KW-0002">3D-structure</keyword>
<keyword id="KW-0131">Cell cycle</keyword>
<keyword id="KW-0137">Centromere</keyword>
<keyword id="KW-0158">Chromosome</keyword>
<keyword id="KW-0995">Kinetochore</keyword>
<keyword id="KW-0539">Nucleus</keyword>
<keyword id="KW-0597">Phosphoprotein</keyword>
<keyword id="KW-1185">Reference proteome</keyword>
<keyword id="KW-0677">Repeat</keyword>
<keyword id="KW-0853">WD repeat</keyword>
<dbReference type="EMBL" id="M64707">
    <property type="protein sequence ID" value="AAA34459.1"/>
    <property type="molecule type" value="Genomic_DNA"/>
</dbReference>
<dbReference type="EMBL" id="X87331">
    <property type="protein sequence ID" value="CAA60742.1"/>
    <property type="molecule type" value="Genomic_DNA"/>
</dbReference>
<dbReference type="EMBL" id="Z74934">
    <property type="protein sequence ID" value="CAA99216.1"/>
    <property type="molecule type" value="Genomic_DNA"/>
</dbReference>
<dbReference type="EMBL" id="BK006948">
    <property type="protein sequence ID" value="DAA10808.1"/>
    <property type="molecule type" value="Genomic_DNA"/>
</dbReference>
<dbReference type="PIR" id="B39654">
    <property type="entry name" value="B39654"/>
</dbReference>
<dbReference type="RefSeq" id="NP_014669.1">
    <property type="nucleotide sequence ID" value="NM_001183445.1"/>
</dbReference>
<dbReference type="PDB" id="1U4C">
    <property type="method" value="X-ray"/>
    <property type="resolution" value="2.35 A"/>
    <property type="chains" value="A/B=1-341"/>
</dbReference>
<dbReference type="PDB" id="1YFQ">
    <property type="method" value="X-ray"/>
    <property type="resolution" value="1.10 A"/>
    <property type="chains" value="A=1-341"/>
</dbReference>
<dbReference type="PDB" id="2I3S">
    <property type="method" value="X-ray"/>
    <property type="resolution" value="1.90 A"/>
    <property type="chains" value="A/C/E=1-341"/>
</dbReference>
<dbReference type="PDB" id="2I3T">
    <property type="method" value="X-ray"/>
    <property type="resolution" value="2.80 A"/>
    <property type="chains" value="A/C/E/G=1-341"/>
</dbReference>
<dbReference type="PDB" id="4BL0">
    <property type="method" value="X-ray"/>
    <property type="resolution" value="1.95 A"/>
    <property type="chains" value="A/D=1-341"/>
</dbReference>
<dbReference type="PDBsum" id="1U4C"/>
<dbReference type="PDBsum" id="1YFQ"/>
<dbReference type="PDBsum" id="2I3S"/>
<dbReference type="PDBsum" id="2I3T"/>
<dbReference type="PDBsum" id="4BL0"/>
<dbReference type="SMR" id="P26449"/>
<dbReference type="BioGRID" id="34429">
    <property type="interactions" value="717"/>
</dbReference>
<dbReference type="ComplexPortal" id="CPX-154">
    <property type="entry name" value="Bub1-Bub3 complex"/>
</dbReference>
<dbReference type="ComplexPortal" id="CPX-3212">
    <property type="entry name" value="Mitotic checkpoint complex, MAD1-MAD2-BUB1-BUB3 subcomplex"/>
</dbReference>
<dbReference type="ComplexPortal" id="CPX-963">
    <property type="entry name" value="Mitotic checkpoint complex, MAD2-MAD3-BUB3-CDC20"/>
</dbReference>
<dbReference type="DIP" id="DIP-1219N"/>
<dbReference type="FunCoup" id="P26449">
    <property type="interactions" value="368"/>
</dbReference>
<dbReference type="IntAct" id="P26449">
    <property type="interactions" value="12"/>
</dbReference>
<dbReference type="MINT" id="P26449"/>
<dbReference type="STRING" id="4932.YOR026W"/>
<dbReference type="iPTMnet" id="P26449"/>
<dbReference type="PaxDb" id="4932-YOR026W"/>
<dbReference type="PeptideAtlas" id="P26449"/>
<dbReference type="EnsemblFungi" id="YOR026W_mRNA">
    <property type="protein sequence ID" value="YOR026W"/>
    <property type="gene ID" value="YOR026W"/>
</dbReference>
<dbReference type="GeneID" id="854191"/>
<dbReference type="KEGG" id="sce:YOR026W"/>
<dbReference type="AGR" id="SGD:S000005552"/>
<dbReference type="SGD" id="S000005552">
    <property type="gene designation" value="BUB3"/>
</dbReference>
<dbReference type="VEuPathDB" id="FungiDB:YOR026W"/>
<dbReference type="eggNOG" id="KOG1036">
    <property type="taxonomic scope" value="Eukaryota"/>
</dbReference>
<dbReference type="GeneTree" id="ENSGT00950000183091"/>
<dbReference type="HOGENOM" id="CLU_038526_2_0_1"/>
<dbReference type="InParanoid" id="P26449"/>
<dbReference type="OMA" id="ENECKPK"/>
<dbReference type="OrthoDB" id="10262475at2759"/>
<dbReference type="BioCyc" id="YEAST:G3O-33573-MONOMER"/>
<dbReference type="Reactome" id="R-SCE-141430">
    <property type="pathway name" value="Inactivation of APC/C via direct inhibition of the APC/C complex"/>
</dbReference>
<dbReference type="BioGRID-ORCS" id="854191">
    <property type="hits" value="0 hits in 10 CRISPR screens"/>
</dbReference>
<dbReference type="EvolutionaryTrace" id="P26449"/>
<dbReference type="PRO" id="PR:P26449"/>
<dbReference type="Proteomes" id="UP000002311">
    <property type="component" value="Chromosome XV"/>
</dbReference>
<dbReference type="RNAct" id="P26449">
    <property type="molecule type" value="protein"/>
</dbReference>
<dbReference type="GO" id="GO:1990298">
    <property type="term" value="C:bub1-bub3 complex"/>
    <property type="evidence" value="ECO:0000314"/>
    <property type="project" value="UniProtKB"/>
</dbReference>
<dbReference type="GO" id="GO:0000776">
    <property type="term" value="C:kinetochore"/>
    <property type="evidence" value="ECO:0000314"/>
    <property type="project" value="UniProtKB"/>
</dbReference>
<dbReference type="GO" id="GO:0033597">
    <property type="term" value="C:mitotic checkpoint complex"/>
    <property type="evidence" value="ECO:0000314"/>
    <property type="project" value="SGD"/>
</dbReference>
<dbReference type="GO" id="GO:0005654">
    <property type="term" value="C:nucleoplasm"/>
    <property type="evidence" value="ECO:0000318"/>
    <property type="project" value="GO_Central"/>
</dbReference>
<dbReference type="GO" id="GO:0005634">
    <property type="term" value="C:nucleus"/>
    <property type="evidence" value="ECO:0000314"/>
    <property type="project" value="UniProtKB"/>
</dbReference>
<dbReference type="GO" id="GO:0043130">
    <property type="term" value="F:ubiquitin binding"/>
    <property type="evidence" value="ECO:0000314"/>
    <property type="project" value="SGD"/>
</dbReference>
<dbReference type="GO" id="GO:0044774">
    <property type="term" value="P:mitotic DNA integrity checkpoint signaling"/>
    <property type="evidence" value="ECO:0000316"/>
    <property type="project" value="SGD"/>
</dbReference>
<dbReference type="GO" id="GO:0007094">
    <property type="term" value="P:mitotic spindle assembly checkpoint signaling"/>
    <property type="evidence" value="ECO:0000314"/>
    <property type="project" value="ComplexPortal"/>
</dbReference>
<dbReference type="GO" id="GO:1902499">
    <property type="term" value="P:positive regulation of protein autoubiquitination"/>
    <property type="evidence" value="ECO:0000314"/>
    <property type="project" value="SGD"/>
</dbReference>
<dbReference type="FunFam" id="2.130.10.10:FF:001183">
    <property type="entry name" value="Cell cycle arrest protein BUB3"/>
    <property type="match status" value="1"/>
</dbReference>
<dbReference type="Gene3D" id="2.130.10.10">
    <property type="entry name" value="YVTN repeat-like/Quinoprotein amine dehydrogenase"/>
    <property type="match status" value="1"/>
</dbReference>
<dbReference type="InterPro" id="IPR015943">
    <property type="entry name" value="WD40/YVTN_repeat-like_dom_sf"/>
</dbReference>
<dbReference type="InterPro" id="IPR036322">
    <property type="entry name" value="WD40_repeat_dom_sf"/>
</dbReference>
<dbReference type="InterPro" id="IPR001680">
    <property type="entry name" value="WD40_rpt"/>
</dbReference>
<dbReference type="PANTHER" id="PTHR10971">
    <property type="entry name" value="MRNA EXPORT FACTOR AND BUB3"/>
    <property type="match status" value="1"/>
</dbReference>
<dbReference type="Pfam" id="PF00400">
    <property type="entry name" value="WD40"/>
    <property type="match status" value="1"/>
</dbReference>
<dbReference type="SMART" id="SM00320">
    <property type="entry name" value="WD40"/>
    <property type="match status" value="4"/>
</dbReference>
<dbReference type="SUPFAM" id="SSF50978">
    <property type="entry name" value="WD40 repeat-like"/>
    <property type="match status" value="1"/>
</dbReference>
<dbReference type="PROSITE" id="PS50082">
    <property type="entry name" value="WD_REPEATS_2"/>
    <property type="match status" value="1"/>
</dbReference>
<dbReference type="PROSITE" id="PS50294">
    <property type="entry name" value="WD_REPEATS_REGION"/>
    <property type="match status" value="1"/>
</dbReference>
<accession>P26449</accession>
<accession>D6W292</accession>
<proteinExistence type="evidence at protein level"/>
<reference key="1">
    <citation type="journal article" date="1991" name="Cell">
        <title>S. cerevisiae genes required for cell cycle arrest in response to loss of microtubule function.</title>
        <authorList>
            <person name="Hoyt M.A."/>
            <person name="Totis L."/>
            <person name="Roberts B.T."/>
        </authorList>
    </citation>
    <scope>NUCLEOTIDE SEQUENCE [GENOMIC DNA]</scope>
    <source>
        <strain>ATCC 204508 / S288c</strain>
    </source>
</reference>
<reference key="2">
    <citation type="journal article" date="1997" name="Nature">
        <title>The nucleotide sequence of Saccharomyces cerevisiae chromosome XV.</title>
        <authorList>
            <person name="Dujon B."/>
            <person name="Albermann K."/>
            <person name="Aldea M."/>
            <person name="Alexandraki D."/>
            <person name="Ansorge W."/>
            <person name="Arino J."/>
            <person name="Benes V."/>
            <person name="Bohn C."/>
            <person name="Bolotin-Fukuhara M."/>
            <person name="Bordonne R."/>
            <person name="Boyer J."/>
            <person name="Camasses A."/>
            <person name="Casamayor A."/>
            <person name="Casas C."/>
            <person name="Cheret G."/>
            <person name="Cziepluch C."/>
            <person name="Daignan-Fornier B."/>
            <person name="Dang V.-D."/>
            <person name="de Haan M."/>
            <person name="Delius H."/>
            <person name="Durand P."/>
            <person name="Fairhead C."/>
            <person name="Feldmann H."/>
            <person name="Gaillon L."/>
            <person name="Galisson F."/>
            <person name="Gamo F.-J."/>
            <person name="Gancedo C."/>
            <person name="Goffeau A."/>
            <person name="Goulding S.E."/>
            <person name="Grivell L.A."/>
            <person name="Habbig B."/>
            <person name="Hand N.J."/>
            <person name="Hani J."/>
            <person name="Hattenhorst U."/>
            <person name="Hebling U."/>
            <person name="Hernando Y."/>
            <person name="Herrero E."/>
            <person name="Heumann K."/>
            <person name="Hiesel R."/>
            <person name="Hilger F."/>
            <person name="Hofmann B."/>
            <person name="Hollenberg C.P."/>
            <person name="Hughes B."/>
            <person name="Jauniaux J.-C."/>
            <person name="Kalogeropoulos A."/>
            <person name="Katsoulou C."/>
            <person name="Kordes E."/>
            <person name="Lafuente M.J."/>
            <person name="Landt O."/>
            <person name="Louis E.J."/>
            <person name="Maarse A.C."/>
            <person name="Madania A."/>
            <person name="Mannhaupt G."/>
            <person name="Marck C."/>
            <person name="Martin R.P."/>
            <person name="Mewes H.-W."/>
            <person name="Michaux G."/>
            <person name="Paces V."/>
            <person name="Parle-McDermott A.G."/>
            <person name="Pearson B.M."/>
            <person name="Perrin A."/>
            <person name="Pettersson B."/>
            <person name="Poch O."/>
            <person name="Pohl T.M."/>
            <person name="Poirey R."/>
            <person name="Portetelle D."/>
            <person name="Pujol A."/>
            <person name="Purnelle B."/>
            <person name="Ramezani Rad M."/>
            <person name="Rechmann S."/>
            <person name="Schwager C."/>
            <person name="Schweizer M."/>
            <person name="Sor F."/>
            <person name="Sterky F."/>
            <person name="Tarassov I.A."/>
            <person name="Teodoru C."/>
            <person name="Tettelin H."/>
            <person name="Thierry A."/>
            <person name="Tobiasch E."/>
            <person name="Tzermia M."/>
            <person name="Uhlen M."/>
            <person name="Unseld M."/>
            <person name="Valens M."/>
            <person name="Vandenbol M."/>
            <person name="Vetter I."/>
            <person name="Vlcek C."/>
            <person name="Voet M."/>
            <person name="Volckaert G."/>
            <person name="Voss H."/>
            <person name="Wambutt R."/>
            <person name="Wedler H."/>
            <person name="Wiemann S."/>
            <person name="Winsor B."/>
            <person name="Wolfe K.H."/>
            <person name="Zollner A."/>
            <person name="Zumstein E."/>
            <person name="Kleine K."/>
        </authorList>
    </citation>
    <scope>NUCLEOTIDE SEQUENCE [LARGE SCALE GENOMIC DNA]</scope>
    <source>
        <strain>ATCC 204508 / S288c</strain>
    </source>
</reference>
<reference key="3">
    <citation type="journal article" date="2014" name="G3 (Bethesda)">
        <title>The reference genome sequence of Saccharomyces cerevisiae: Then and now.</title>
        <authorList>
            <person name="Engel S.R."/>
            <person name="Dietrich F.S."/>
            <person name="Fisk D.G."/>
            <person name="Binkley G."/>
            <person name="Balakrishnan R."/>
            <person name="Costanzo M.C."/>
            <person name="Dwight S.S."/>
            <person name="Hitz B.C."/>
            <person name="Karra K."/>
            <person name="Nash R.S."/>
            <person name="Weng S."/>
            <person name="Wong E.D."/>
            <person name="Lloyd P."/>
            <person name="Skrzypek M.S."/>
            <person name="Miyasato S.R."/>
            <person name="Simison M."/>
            <person name="Cherry J.M."/>
        </authorList>
    </citation>
    <scope>GENOME REANNOTATION</scope>
    <source>
        <strain>ATCC 204508 / S288c</strain>
    </source>
</reference>
<reference key="4">
    <citation type="journal article" date="1994" name="Mol. Cell. Biol.">
        <title>The Saccharomyces cerevisiae checkpoint gene BUB1 encodes a novel protein kinase.</title>
        <authorList>
            <person name="Roberts B.T."/>
            <person name="Farr K.A."/>
            <person name="Hoyt M.A."/>
        </authorList>
    </citation>
    <scope>PHOSPHORYLATION</scope>
    <source>
        <strain>ATCC 204508 / S288c</strain>
    </source>
</reference>
<reference key="5">
    <citation type="journal article" date="2000" name="Curr. Biol.">
        <title>Complex formation between Mad1p, Bub1p and Bub3p is crucial for spindle checkpoint function.</title>
        <authorList>
            <person name="Brady D.M."/>
            <person name="Hardwick K.G."/>
        </authorList>
    </citation>
    <scope>IDENTIFICATION IN A COMPLEX WITH MAD1 AND BUB1</scope>
</reference>
<reference key="6">
    <citation type="journal article" date="2001" name="EMBO J.">
        <title>Bub3 interaction with Mad2, Mad3 and Cdc20 is mediated by WD40 repeats and does not require intact kinetochores.</title>
        <authorList>
            <person name="Fraschini R."/>
            <person name="Beretta A."/>
            <person name="Sironi L."/>
            <person name="Musacchio A."/>
            <person name="Lucchini G."/>
            <person name="Piatti S."/>
        </authorList>
    </citation>
    <scope>INTERACTION WITH CDC20; MAD1 AND MAD2</scope>
    <scope>IDENTIFICATION IN THE MCC COMPLEX</scope>
    <scope>MUTAGENESIS OF TRP-31 AND TRP-120</scope>
</reference>
<reference key="7">
    <citation type="journal article" date="2003" name="Nature">
        <title>Global analysis of protein expression in yeast.</title>
        <authorList>
            <person name="Ghaemmaghami S."/>
            <person name="Huh W.-K."/>
            <person name="Bower K."/>
            <person name="Howson R.W."/>
            <person name="Belle A."/>
            <person name="Dephoure N."/>
            <person name="O'Shea E.K."/>
            <person name="Weissman J.S."/>
        </authorList>
    </citation>
    <scope>LEVEL OF PROTEIN EXPRESSION [LARGE SCALE ANALYSIS]</scope>
</reference>
<reference key="8">
    <citation type="journal article" date="2005" name="Eukaryot. Cell">
        <title>Two complexes of spindle checkpoint proteins containing Cdc20 and Mad2 assemble during mitosis independently of the kinetochore in Saccharomyces cerevisiae.</title>
        <authorList>
            <person name="Poddar A."/>
            <person name="Stukenberg P.T."/>
            <person name="Burke D.J."/>
        </authorList>
    </citation>
    <scope>IDENTIFICATION IN THE MCC COMPLEX</scope>
    <scope>FUNCTION OF THE MCC COMPLEX</scope>
</reference>
<reference key="9">
    <citation type="journal article" date="2004" name="J. Mol. Biol.">
        <title>Crystal structure of the spindle assembly checkpoint protein Bub3.</title>
        <authorList>
            <person name="Larsen N.A."/>
            <person name="Harrison S.C."/>
        </authorList>
    </citation>
    <scope>X-RAY CRYSTALLOGRAPHY (2.35 ANGSTROMS)</scope>
</reference>
<reference key="10">
    <citation type="journal article" date="2005" name="J. Biol. Chem.">
        <title>The 1.1-angstrom structure of the spindle checkpoint protein Bub3p reveals functional regions.</title>
        <authorList>
            <person name="Wilson D.K."/>
            <person name="Cerna D."/>
            <person name="Chew E."/>
        </authorList>
    </citation>
    <scope>X-RAY CRYSTALLOGRAPHY (1.1 ANGSTROMS)</scope>
    <scope>MUTAGENESIS OF GLN-2; GLU-188; GLY-191; LEU-192; LYS-193; ARG-217; GLN-226; ARG-242; SER-276 AND TRP-278</scope>
</reference>
<reference evidence="10 11" key="11">
    <citation type="journal article" date="2007" name="Proc. Natl. Acad. Sci. U.S.A.">
        <title>Structural analysis of Bub3 interactions in the mitotic spindle checkpoint.</title>
        <authorList>
            <person name="Larsen N.A."/>
            <person name="Al-Bassam J."/>
            <person name="Wei R.R."/>
            <person name="Harrison S.C."/>
        </authorList>
    </citation>
    <scope>X-RAY CRYSTALLOGRAPHY (1.90 ANGSTROMS) IN COMPLEX WITH MAD3</scope>
    <scope>IDENTIFICATION IN THE BUB1-BUB3 COMPLEX</scope>
</reference>
<reference evidence="12" key="12">
    <citation type="journal article" date="2013" name="Elife">
        <title>Bub3 reads phosphorylated MELT repeats to promote spindle assembly checkpoint signaling.</title>
        <authorList>
            <person name="Primorac I."/>
            <person name="Weir J.R."/>
            <person name="Chiroli E."/>
            <person name="Gross F."/>
            <person name="Hoffmann I."/>
            <person name="van Gerwen S."/>
            <person name="Ciliberto A."/>
            <person name="Musacchio A."/>
        </authorList>
    </citation>
    <scope>X-RAY CRYSTALLOGRAPHY (1.95 ANGSTROMS) IN COMPLEX WITH MG(2+); SPC105 AND BUB1</scope>
    <scope>FUNCTION</scope>
    <scope>IDENTIFICATION IN THE BUB1-BUB3 COMPLEX</scope>
    <scope>SUBCELLULAR LOCATION</scope>
    <scope>DISRUPTION PHENOTYPE</scope>
    <scope>MUTAGENESIS OF ARG-217 AND ARG-239</scope>
</reference>
<name>BUB3_YEAST</name>
<protein>
    <recommendedName>
        <fullName evidence="9">Spindle assembly checkpoint protein BUB3</fullName>
    </recommendedName>
    <alternativeName>
        <fullName>Cell cycle arrest protein BUB3</fullName>
    </alternativeName>
</protein>
<organism>
    <name type="scientific">Saccharomyces cerevisiae (strain ATCC 204508 / S288c)</name>
    <name type="common">Baker's yeast</name>
    <dbReference type="NCBI Taxonomy" id="559292"/>
    <lineage>
        <taxon>Eukaryota</taxon>
        <taxon>Fungi</taxon>
        <taxon>Dikarya</taxon>
        <taxon>Ascomycota</taxon>
        <taxon>Saccharomycotina</taxon>
        <taxon>Saccharomycetes</taxon>
        <taxon>Saccharomycetales</taxon>
        <taxon>Saccharomycetaceae</taxon>
        <taxon>Saccharomyces</taxon>
    </lineage>
</organism>
<comment type="function">
    <text evidence="5 7">Involved in mitotic spindle assembly checkpoint signaling, a process that delays anaphase until chromosomes are bioriented on the spindle, and in the repair of incorrect mitotic kinetochore-spindle microtubule attachments (PubMed:15879521, PubMed:24066227). Component of the mitotic checkpoint complex (MCC) which inhibits the ubiquitin ligase activity of the anaphase promoting complex/cyclosome (APC/C) by preventing its activation by CDC20 (PubMed:15879521).</text>
</comment>
<comment type="subunit">
    <text evidence="1 2 5 6 7">Component of the mitotic checkpoint complex (MCC) which consists of MAD2, MAD3, BUB3 and CDC20 (PubMed:11726501, PubMed:15879521). Part of complex consisting of MAD1, BUB1 and BUB3 after activation of spindle checkpoint (PubMed:10837255, PubMed:17227844). Part of the BUB1-BUB3 complex, composed of BUB1 and BUB3 (PubMed:24066227). Interacts with SPC105 (via phosphorylated MELT motifs); the interaction is direct and occurs when part of the BUB1-BUB3 complex (PubMed:24066227). Interacts with MAD3; the interaction is direct (PubMed:17227844).</text>
</comment>
<comment type="interaction">
    <interactant intactId="EBI-3830">
        <id>P26449</id>
    </interactant>
    <interactant intactId="EBI-3816">
        <id>P41695</id>
        <label>BUB1</label>
    </interactant>
    <organismsDiffer>false</organismsDiffer>
    <experiments>13</experiments>
</comment>
<comment type="interaction">
    <interactant intactId="EBI-3830">
        <id>P26449</id>
    </interactant>
    <interactant intactId="EBI-4212">
        <id>P26309</id>
        <label>CDC20</label>
    </interactant>
    <organismsDiffer>false</organismsDiffer>
    <experiments>8</experiments>
</comment>
<comment type="interaction">
    <interactant intactId="EBI-3830">
        <id>P26449</id>
    </interactant>
    <interactant intactId="EBI-10354">
        <id>P40957</id>
        <label>MAD1</label>
    </interactant>
    <organismsDiffer>false</organismsDiffer>
    <experiments>4</experiments>
</comment>
<comment type="interaction">
    <interactant intactId="EBI-3830">
        <id>P26449</id>
    </interactant>
    <interactant intactId="EBI-10362">
        <id>P40958</id>
        <label>MAD2</label>
    </interactant>
    <organismsDiffer>false</organismsDiffer>
    <experiments>4</experiments>
</comment>
<comment type="interaction">
    <interactant intactId="EBI-3830">
        <id>P26449</id>
    </interactant>
    <interactant intactId="EBI-10369">
        <id>P47074</id>
        <label>MAD3</label>
    </interactant>
    <organismsDiffer>false</organismsDiffer>
    <experiments>14</experiments>
</comment>
<comment type="subcellular location">
    <subcellularLocation>
        <location evidence="7">Nucleus</location>
    </subcellularLocation>
    <subcellularLocation>
        <location evidence="7">Chromosome</location>
        <location evidence="7">Centromere</location>
        <location evidence="7">Kinetochore</location>
    </subcellularLocation>
</comment>
<comment type="PTM">
    <text evidence="8">Phosphorylated by BUB1.</text>
</comment>
<comment type="disruption phenotype">
    <text evidence="7">Abolishes spindle assembly checkpoint signaling.</text>
</comment>
<comment type="miscellaneous">
    <text evidence="3">Present with 1430 molecules/cell in log phase SD medium.</text>
</comment>
<comment type="similarity">
    <text evidence="9">Belongs to the WD repeat BUB3 family.</text>
</comment>
<gene>
    <name type="primary">BUB3</name>
    <name type="ordered locus">YOR026W</name>
    <name type="ORF">OR26.16</name>
</gene>
<sequence length="341" mass="38445">MQIVQIEQAPKDYISDIKIIPSKSLLLITSWDGSLTVYKFDIQAKNVDLLQSLRYKHPLLCCNFIDNTDLQIYVGTVQGEILKVDLIGSPSFQALTNNEANLGICRICKYGDDKLIAASWDGLIEVIDPRNYGDGVIAVKNLNSNNTKVKNKIFTMDTNSSRLIVGMNNSQVQWFRLPLCEDDNGTIEESGLKYQIRDVALLPKEQEGYACSSIDGRVAVEFFDDQGDDYNSSKRFAFRCHRLNLKDTNLAYPVNSIEFSPRHKFLYTAGSDGIISCWNLQTRKKIKNFAKFNEDSVVKIACSDNILCLATSDDTFKTNAAIDQTIELNASSIYIIFDYEN</sequence>
<feature type="chain" id="PRO_0000050890" description="Spindle assembly checkpoint protein BUB3">
    <location>
        <begin position="1"/>
        <end position="341"/>
    </location>
</feature>
<feature type="repeat" description="WD 1">
    <location>
        <begin position="9"/>
        <end position="48"/>
    </location>
</feature>
<feature type="repeat" description="WD 2">
    <location>
        <begin position="54"/>
        <end position="96"/>
    </location>
</feature>
<feature type="repeat" description="WD 3">
    <location>
        <begin position="97"/>
        <end position="137"/>
    </location>
</feature>
<feature type="repeat" description="WD 4">
    <location>
        <begin position="144"/>
        <end position="185"/>
    </location>
</feature>
<feature type="repeat" description="WD 5">
    <location>
        <begin position="191"/>
        <end position="233"/>
    </location>
</feature>
<feature type="repeat" description="WD 6">
    <location>
        <begin position="249"/>
        <end position="288"/>
    </location>
</feature>
<feature type="repeat" description="WD 7">
    <location>
        <begin position="292"/>
        <end position="329"/>
    </location>
</feature>
<feature type="mutagenesis site" description="Abolishes checkpoint function. Benomyl-sensitive phenotype." evidence="4">
    <original>Q</original>
    <variation>L</variation>
    <location>
        <position position="2"/>
    </location>
</feature>
<feature type="mutagenesis site" description="Abolishes checkpoint function and interaction with MAD2, MAD3 and CDC20. Benomyl-sensitive phenotype." evidence="2">
    <original>W</original>
    <variation>G</variation>
    <location>
        <position position="31"/>
    </location>
</feature>
<feature type="mutagenesis site" description="Abolishes checkpoint function and interaction with MAD2, MAD3 and CDC20. Benomyl-sensitive phenotype." evidence="2">
    <original>W</original>
    <variation>G</variation>
    <location>
        <position position="120"/>
    </location>
</feature>
<feature type="mutagenesis site" description="Abolishes checkpoint function. No effect on interaction with BUB1 and MAD3. Benomyl-sensitive phenotype." evidence="4">
    <original>E</original>
    <variation>V</variation>
    <location>
        <position position="188"/>
    </location>
</feature>
<feature type="mutagenesis site" description="Abolishes checkpoint function. No effect on interaction with BUB1 and MAD3. Benomyl-sensitive phenotype." evidence="4">
    <original>G</original>
    <variation>R</variation>
    <location>
        <position position="191"/>
    </location>
</feature>
<feature type="mutagenesis site" description="Abolishes checkpoint function. No effect on interaction with BUB1 and MAD3. Benomyl-sensitive phenotype." evidence="4">
    <original>L</original>
    <variation>E</variation>
    <location>
        <position position="192"/>
    </location>
</feature>
<feature type="mutagenesis site" description="Abolishes checkpoint function. No effect on interaction with BUB1 and MAD3. Benomyl-sensitive phenotype." evidence="4">
    <original>K</original>
    <variation>T</variation>
    <location>
        <position position="193"/>
    </location>
</feature>
<feature type="mutagenesis site" description="Decreases binding to a peptide containing a phosphorylated MELT motif, and the effect is exacerbated; when associated with A-239. Abolishes localization to the kinetochore and abolishes spindle assembly checkpoint signaling; when associated with A-239." evidence="7">
    <original>R</original>
    <variation>A</variation>
    <location>
        <position position="217"/>
    </location>
</feature>
<feature type="mutagenesis site" description="Abolishes checkpoint function. Benomyl-sensitive phenotype." evidence="4">
    <original>R</original>
    <variation>E</variation>
    <location>
        <position position="217"/>
    </location>
</feature>
<feature type="mutagenesis site" description="Abolishes checkpoint function. No effect on interaction with BUB1 and MAD3. Benomyl-sensitive phenotype." evidence="4">
    <original>Q</original>
    <variation>L</variation>
    <location>
        <position position="226"/>
    </location>
</feature>
<feature type="mutagenesis site" description="Decreases binding to a peptide containing a phosphorylated MELT motif, and the effect is exacerbated; when associated with A-217. Abolishes localization to the kinetochore and abolishes spindle assembly checkpoint signaling; when associated with A-217." evidence="7">
    <original>R</original>
    <variation>A</variation>
    <location>
        <position position="239"/>
    </location>
</feature>
<feature type="mutagenesis site" description="Abolishes checkpoint function. Benomyl-sensitive phenotype." evidence="4">
    <original>R</original>
    <variation>E</variation>
    <location>
        <position position="242"/>
    </location>
</feature>
<feature type="mutagenesis site" description="Abolishes checkpoint function. Lowers interaction with BUB1 and MAD3. Benomyl-sensitive phenotype." evidence="4">
    <original>S</original>
    <variation>P</variation>
    <location>
        <position position="276"/>
    </location>
</feature>
<feature type="mutagenesis site" description="Abolishes checkpoint function. No effect on interaction with BUB1. Lowers interaction with MAD3. Benomyl-sensitive phenotype." evidence="4">
    <original>W</original>
    <variation>R</variation>
    <location>
        <position position="278"/>
    </location>
</feature>
<feature type="strand" evidence="13">
    <location>
        <begin position="2"/>
        <end position="5"/>
    </location>
</feature>
<feature type="strand" evidence="13">
    <location>
        <begin position="14"/>
        <end position="20"/>
    </location>
</feature>
<feature type="helix" evidence="13">
    <location>
        <begin position="21"/>
        <end position="23"/>
    </location>
</feature>
<feature type="strand" evidence="13">
    <location>
        <begin position="25"/>
        <end position="30"/>
    </location>
</feature>
<feature type="strand" evidence="13">
    <location>
        <begin position="33"/>
        <end position="41"/>
    </location>
</feature>
<feature type="turn" evidence="13">
    <location>
        <begin position="42"/>
        <end position="45"/>
    </location>
</feature>
<feature type="strand" evidence="13">
    <location>
        <begin position="46"/>
        <end position="54"/>
    </location>
</feature>
<feature type="strand" evidence="13">
    <location>
        <begin position="59"/>
        <end position="76"/>
    </location>
</feature>
<feature type="strand" evidence="13">
    <location>
        <begin position="81"/>
        <end position="84"/>
    </location>
</feature>
<feature type="strand" evidence="13">
    <location>
        <begin position="86"/>
        <end position="94"/>
    </location>
</feature>
<feature type="strand" evidence="13">
    <location>
        <begin position="104"/>
        <end position="110"/>
    </location>
</feature>
<feature type="turn" evidence="13">
    <location>
        <begin position="111"/>
        <end position="113"/>
    </location>
</feature>
<feature type="strand" evidence="13">
    <location>
        <begin position="114"/>
        <end position="119"/>
    </location>
</feature>
<feature type="strand" evidence="13">
    <location>
        <begin position="122"/>
        <end position="127"/>
    </location>
</feature>
<feature type="helix" evidence="13">
    <location>
        <begin position="129"/>
        <end position="132"/>
    </location>
</feature>
<feature type="strand" evidence="14">
    <location>
        <begin position="133"/>
        <end position="135"/>
    </location>
</feature>
<feature type="strand" evidence="13">
    <location>
        <begin position="137"/>
        <end position="142"/>
    </location>
</feature>
<feature type="strand" evidence="13">
    <location>
        <begin position="144"/>
        <end position="149"/>
    </location>
</feature>
<feature type="strand" evidence="13">
    <location>
        <begin position="153"/>
        <end position="158"/>
    </location>
</feature>
<feature type="strand" evidence="13">
    <location>
        <begin position="160"/>
        <end position="168"/>
    </location>
</feature>
<feature type="strand" evidence="13">
    <location>
        <begin position="171"/>
        <end position="178"/>
    </location>
</feature>
<feature type="strand" evidence="15">
    <location>
        <begin position="181"/>
        <end position="183"/>
    </location>
</feature>
<feature type="strand" evidence="13">
    <location>
        <begin position="186"/>
        <end position="189"/>
    </location>
</feature>
<feature type="strand" evidence="13">
    <location>
        <begin position="196"/>
        <end position="201"/>
    </location>
</feature>
<feature type="helix" evidence="13">
    <location>
        <begin position="204"/>
        <end position="206"/>
    </location>
</feature>
<feature type="strand" evidence="13">
    <location>
        <begin position="208"/>
        <end position="213"/>
    </location>
</feature>
<feature type="strand" evidence="13">
    <location>
        <begin position="216"/>
        <end position="222"/>
    </location>
</feature>
<feature type="strand" evidence="13">
    <location>
        <begin position="236"/>
        <end position="239"/>
    </location>
</feature>
<feature type="strand" evidence="14">
    <location>
        <begin position="241"/>
        <end position="243"/>
    </location>
</feature>
<feature type="strand" evidence="14">
    <location>
        <begin position="249"/>
        <end position="251"/>
    </location>
</feature>
<feature type="strand" evidence="13">
    <location>
        <begin position="254"/>
        <end position="259"/>
    </location>
</feature>
<feature type="turn" evidence="13">
    <location>
        <begin position="261"/>
        <end position="263"/>
    </location>
</feature>
<feature type="strand" evidence="13">
    <location>
        <begin position="266"/>
        <end position="270"/>
    </location>
</feature>
<feature type="strand" evidence="13">
    <location>
        <begin position="275"/>
        <end position="279"/>
    </location>
</feature>
<feature type="turn" evidence="13">
    <location>
        <begin position="280"/>
        <end position="283"/>
    </location>
</feature>
<feature type="strand" evidence="13">
    <location>
        <begin position="284"/>
        <end position="288"/>
    </location>
</feature>
<feature type="strand" evidence="13">
    <location>
        <begin position="293"/>
        <end position="302"/>
    </location>
</feature>
<feature type="strand" evidence="13">
    <location>
        <begin position="304"/>
        <end position="312"/>
    </location>
</feature>
<feature type="helix" evidence="13">
    <location>
        <begin position="315"/>
        <end position="318"/>
    </location>
</feature>
<feature type="strand" evidence="13">
    <location>
        <begin position="320"/>
        <end position="322"/>
    </location>
</feature>
<feature type="strand" evidence="13">
    <location>
        <begin position="332"/>
        <end position="337"/>
    </location>
</feature>
<evidence type="ECO:0000269" key="1">
    <source>
    </source>
</evidence>
<evidence type="ECO:0000269" key="2">
    <source>
    </source>
</evidence>
<evidence type="ECO:0000269" key="3">
    <source>
    </source>
</evidence>
<evidence type="ECO:0000269" key="4">
    <source>
    </source>
</evidence>
<evidence type="ECO:0000269" key="5">
    <source>
    </source>
</evidence>
<evidence type="ECO:0000269" key="6">
    <source>
    </source>
</evidence>
<evidence type="ECO:0000269" key="7">
    <source>
    </source>
</evidence>
<evidence type="ECO:0000269" key="8">
    <source>
    </source>
</evidence>
<evidence type="ECO:0000305" key="9"/>
<evidence type="ECO:0007744" key="10">
    <source>
        <dbReference type="PDB" id="2I3S"/>
    </source>
</evidence>
<evidence type="ECO:0007744" key="11">
    <source>
        <dbReference type="PDB" id="2I3T"/>
    </source>
</evidence>
<evidence type="ECO:0007744" key="12">
    <source>
        <dbReference type="PDB" id="4BL0"/>
    </source>
</evidence>
<evidence type="ECO:0007829" key="13">
    <source>
        <dbReference type="PDB" id="1YFQ"/>
    </source>
</evidence>
<evidence type="ECO:0007829" key="14">
    <source>
        <dbReference type="PDB" id="2I3S"/>
    </source>
</evidence>
<evidence type="ECO:0007829" key="15">
    <source>
        <dbReference type="PDB" id="2I3T"/>
    </source>
</evidence>